<gene>
    <name evidence="1" type="primary">kdpC</name>
    <name type="ordered locus">EC55989_0680</name>
</gene>
<comment type="function">
    <text evidence="1">Part of the high-affinity ATP-driven potassium transport (or Kdp) system, which catalyzes the hydrolysis of ATP coupled with the electrogenic transport of potassium into the cytoplasm. This subunit acts as a catalytic chaperone that increases the ATP-binding affinity of the ATP-hydrolyzing subunit KdpB by the formation of a transient KdpB/KdpC/ATP ternary complex.</text>
</comment>
<comment type="subunit">
    <text evidence="1">The system is composed of three essential subunits: KdpA, KdpB and KdpC.</text>
</comment>
<comment type="subcellular location">
    <subcellularLocation>
        <location evidence="1">Cell inner membrane</location>
        <topology evidence="1">Single-pass membrane protein</topology>
    </subcellularLocation>
</comment>
<comment type="similarity">
    <text evidence="1">Belongs to the KdpC family.</text>
</comment>
<reference key="1">
    <citation type="journal article" date="2009" name="PLoS Genet.">
        <title>Organised genome dynamics in the Escherichia coli species results in highly diverse adaptive paths.</title>
        <authorList>
            <person name="Touchon M."/>
            <person name="Hoede C."/>
            <person name="Tenaillon O."/>
            <person name="Barbe V."/>
            <person name="Baeriswyl S."/>
            <person name="Bidet P."/>
            <person name="Bingen E."/>
            <person name="Bonacorsi S."/>
            <person name="Bouchier C."/>
            <person name="Bouvet O."/>
            <person name="Calteau A."/>
            <person name="Chiapello H."/>
            <person name="Clermont O."/>
            <person name="Cruveiller S."/>
            <person name="Danchin A."/>
            <person name="Diard M."/>
            <person name="Dossat C."/>
            <person name="Karoui M.E."/>
            <person name="Frapy E."/>
            <person name="Garry L."/>
            <person name="Ghigo J.M."/>
            <person name="Gilles A.M."/>
            <person name="Johnson J."/>
            <person name="Le Bouguenec C."/>
            <person name="Lescat M."/>
            <person name="Mangenot S."/>
            <person name="Martinez-Jehanne V."/>
            <person name="Matic I."/>
            <person name="Nassif X."/>
            <person name="Oztas S."/>
            <person name="Petit M.A."/>
            <person name="Pichon C."/>
            <person name="Rouy Z."/>
            <person name="Ruf C.S."/>
            <person name="Schneider D."/>
            <person name="Tourret J."/>
            <person name="Vacherie B."/>
            <person name="Vallenet D."/>
            <person name="Medigue C."/>
            <person name="Rocha E.P.C."/>
            <person name="Denamur E."/>
        </authorList>
    </citation>
    <scope>NUCLEOTIDE SEQUENCE [LARGE SCALE GENOMIC DNA]</scope>
    <source>
        <strain>55989 / EAEC</strain>
    </source>
</reference>
<organism>
    <name type="scientific">Escherichia coli (strain 55989 / EAEC)</name>
    <dbReference type="NCBI Taxonomy" id="585055"/>
    <lineage>
        <taxon>Bacteria</taxon>
        <taxon>Pseudomonadati</taxon>
        <taxon>Pseudomonadota</taxon>
        <taxon>Gammaproteobacteria</taxon>
        <taxon>Enterobacterales</taxon>
        <taxon>Enterobacteriaceae</taxon>
        <taxon>Escherichia</taxon>
    </lineage>
</organism>
<keyword id="KW-0067">ATP-binding</keyword>
<keyword id="KW-0997">Cell inner membrane</keyword>
<keyword id="KW-1003">Cell membrane</keyword>
<keyword id="KW-0406">Ion transport</keyword>
<keyword id="KW-0472">Membrane</keyword>
<keyword id="KW-0547">Nucleotide-binding</keyword>
<keyword id="KW-0630">Potassium</keyword>
<keyword id="KW-0633">Potassium transport</keyword>
<keyword id="KW-1185">Reference proteome</keyword>
<keyword id="KW-0812">Transmembrane</keyword>
<keyword id="KW-1133">Transmembrane helix</keyword>
<keyword id="KW-0813">Transport</keyword>
<evidence type="ECO:0000255" key="1">
    <source>
        <dbReference type="HAMAP-Rule" id="MF_00276"/>
    </source>
</evidence>
<dbReference type="EMBL" id="CU928145">
    <property type="protein sequence ID" value="CAU96550.1"/>
    <property type="molecule type" value="Genomic_DNA"/>
</dbReference>
<dbReference type="RefSeq" id="WP_001344323.1">
    <property type="nucleotide sequence ID" value="NC_011748.1"/>
</dbReference>
<dbReference type="SMR" id="B7LAA3"/>
<dbReference type="KEGG" id="eck:EC55989_0680"/>
<dbReference type="HOGENOM" id="CLU_077094_2_0_6"/>
<dbReference type="Proteomes" id="UP000000746">
    <property type="component" value="Chromosome"/>
</dbReference>
<dbReference type="GO" id="GO:0005886">
    <property type="term" value="C:plasma membrane"/>
    <property type="evidence" value="ECO:0007669"/>
    <property type="project" value="UniProtKB-SubCell"/>
</dbReference>
<dbReference type="GO" id="GO:0005524">
    <property type="term" value="F:ATP binding"/>
    <property type="evidence" value="ECO:0007669"/>
    <property type="project" value="UniProtKB-UniRule"/>
</dbReference>
<dbReference type="GO" id="GO:0008556">
    <property type="term" value="F:P-type potassium transmembrane transporter activity"/>
    <property type="evidence" value="ECO:0007669"/>
    <property type="project" value="InterPro"/>
</dbReference>
<dbReference type="HAMAP" id="MF_00276">
    <property type="entry name" value="KdpC"/>
    <property type="match status" value="1"/>
</dbReference>
<dbReference type="InterPro" id="IPR003820">
    <property type="entry name" value="KdpC"/>
</dbReference>
<dbReference type="NCBIfam" id="TIGR00681">
    <property type="entry name" value="kdpC"/>
    <property type="match status" value="1"/>
</dbReference>
<dbReference type="NCBIfam" id="NF001454">
    <property type="entry name" value="PRK00315.1"/>
    <property type="match status" value="1"/>
</dbReference>
<dbReference type="PANTHER" id="PTHR30042">
    <property type="entry name" value="POTASSIUM-TRANSPORTING ATPASE C CHAIN"/>
    <property type="match status" value="1"/>
</dbReference>
<dbReference type="PANTHER" id="PTHR30042:SF2">
    <property type="entry name" value="POTASSIUM-TRANSPORTING ATPASE KDPC SUBUNIT"/>
    <property type="match status" value="1"/>
</dbReference>
<dbReference type="Pfam" id="PF02669">
    <property type="entry name" value="KdpC"/>
    <property type="match status" value="1"/>
</dbReference>
<dbReference type="PIRSF" id="PIRSF001296">
    <property type="entry name" value="K_ATPase_KdpC"/>
    <property type="match status" value="1"/>
</dbReference>
<name>KDPC_ECO55</name>
<accession>B7LAA3</accession>
<sequence length="190" mass="20363">MRGLRPALSTFIFLLLITGGVYPLLTTVLGQWWFPWQANGSLIREGDTVRGSALIGQNFTGNGYFHGRPSATAEMPYNPQASGGSNLAVSNPELDKLIAARVAALRAANPDASASIPVELVTASASGLDNNITPQAAAWQIPRIAKARNLSVEQLTQLIAKYSQQPLVKYIGQPVVNIVKLNLALDKLDE</sequence>
<protein>
    <recommendedName>
        <fullName evidence="1">Potassium-transporting ATPase KdpC subunit</fullName>
    </recommendedName>
    <alternativeName>
        <fullName evidence="1">ATP phosphohydrolase [potassium-transporting] C chain</fullName>
    </alternativeName>
    <alternativeName>
        <fullName evidence="1">Potassium-binding and translocating subunit C</fullName>
    </alternativeName>
    <alternativeName>
        <fullName evidence="1">Potassium-translocating ATPase C chain</fullName>
    </alternativeName>
</protein>
<feature type="chain" id="PRO_1000132516" description="Potassium-transporting ATPase KdpC subunit">
    <location>
        <begin position="1"/>
        <end position="190"/>
    </location>
</feature>
<feature type="transmembrane region" description="Helical" evidence="1">
    <location>
        <begin position="10"/>
        <end position="30"/>
    </location>
</feature>
<proteinExistence type="inferred from homology"/>